<protein>
    <recommendedName>
        <fullName>Nucleoside triphosphate pyrophosphohydrolase</fullName>
        <shortName>NTP-PPase</shortName>
        <ecNumber>3.6.1.8</ecNumber>
    </recommendedName>
</protein>
<proteinExistence type="inferred from homology"/>
<reference key="1">
    <citation type="journal article" date="2001" name="Nature">
        <title>Genome sequence of enterohaemorrhagic Escherichia coli O157:H7.</title>
        <authorList>
            <person name="Perna N.T."/>
            <person name="Plunkett G. III"/>
            <person name="Burland V."/>
            <person name="Mau B."/>
            <person name="Glasner J.D."/>
            <person name="Rose D.J."/>
            <person name="Mayhew G.F."/>
            <person name="Evans P.S."/>
            <person name="Gregor J."/>
            <person name="Kirkpatrick H.A."/>
            <person name="Posfai G."/>
            <person name="Hackett J."/>
            <person name="Klink S."/>
            <person name="Boutin A."/>
            <person name="Shao Y."/>
            <person name="Miller L."/>
            <person name="Grotbeck E.J."/>
            <person name="Davis N.W."/>
            <person name="Lim A."/>
            <person name="Dimalanta E.T."/>
            <person name="Potamousis K."/>
            <person name="Apodaca J."/>
            <person name="Anantharaman T.S."/>
            <person name="Lin J."/>
            <person name="Yen G."/>
            <person name="Schwartz D.C."/>
            <person name="Welch R.A."/>
            <person name="Blattner F.R."/>
        </authorList>
    </citation>
    <scope>NUCLEOTIDE SEQUENCE [LARGE SCALE GENOMIC DNA]</scope>
    <source>
        <strain>O157:H7 / EDL933 / ATCC 700927 / EHEC</strain>
    </source>
</reference>
<reference key="2">
    <citation type="journal article" date="2001" name="DNA Res.">
        <title>Complete genome sequence of enterohemorrhagic Escherichia coli O157:H7 and genomic comparison with a laboratory strain K-12.</title>
        <authorList>
            <person name="Hayashi T."/>
            <person name="Makino K."/>
            <person name="Ohnishi M."/>
            <person name="Kurokawa K."/>
            <person name="Ishii K."/>
            <person name="Yokoyama K."/>
            <person name="Han C.-G."/>
            <person name="Ohtsubo E."/>
            <person name="Nakayama K."/>
            <person name="Murata T."/>
            <person name="Tanaka M."/>
            <person name="Tobe T."/>
            <person name="Iida T."/>
            <person name="Takami H."/>
            <person name="Honda T."/>
            <person name="Sasakawa C."/>
            <person name="Ogasawara N."/>
            <person name="Yasunaga T."/>
            <person name="Kuhara S."/>
            <person name="Shiba T."/>
            <person name="Hattori M."/>
            <person name="Shinagawa H."/>
        </authorList>
    </citation>
    <scope>NUCLEOTIDE SEQUENCE [LARGE SCALE GENOMIC DNA]</scope>
    <source>
        <strain>O157:H7 / Sakai / RIMD 0509952 / EHEC</strain>
    </source>
</reference>
<dbReference type="EC" id="3.6.1.8"/>
<dbReference type="EMBL" id="AE005174">
    <property type="protein sequence ID" value="AAG57894.1"/>
    <property type="molecule type" value="Genomic_DNA"/>
</dbReference>
<dbReference type="EMBL" id="BA000007">
    <property type="protein sequence ID" value="BAB37064.1"/>
    <property type="molecule type" value="Genomic_DNA"/>
</dbReference>
<dbReference type="PIR" id="A98084">
    <property type="entry name" value="A98084"/>
</dbReference>
<dbReference type="PIR" id="B85929">
    <property type="entry name" value="B85929"/>
</dbReference>
<dbReference type="RefSeq" id="NP_311668.1">
    <property type="nucleotide sequence ID" value="NC_002695.1"/>
</dbReference>
<dbReference type="RefSeq" id="WP_001071648.1">
    <property type="nucleotide sequence ID" value="NZ_VOAI01000003.1"/>
</dbReference>
<dbReference type="SMR" id="P0AEY4"/>
<dbReference type="STRING" id="155864.Z4096"/>
<dbReference type="DNASU" id="958247"/>
<dbReference type="GeneID" id="916566"/>
<dbReference type="GeneID" id="93779217"/>
<dbReference type="KEGG" id="ece:Z4096"/>
<dbReference type="KEGG" id="ecs:ECs_3641"/>
<dbReference type="PATRIC" id="fig|386585.9.peg.3805"/>
<dbReference type="eggNOG" id="COG3956">
    <property type="taxonomic scope" value="Bacteria"/>
</dbReference>
<dbReference type="HOGENOM" id="CLU_038356_0_1_6"/>
<dbReference type="OMA" id="HPHIYGD"/>
<dbReference type="Proteomes" id="UP000000558">
    <property type="component" value="Chromosome"/>
</dbReference>
<dbReference type="Proteomes" id="UP000002519">
    <property type="component" value="Chromosome"/>
</dbReference>
<dbReference type="GO" id="GO:0005524">
    <property type="term" value="F:ATP binding"/>
    <property type="evidence" value="ECO:0007669"/>
    <property type="project" value="UniProtKB-KW"/>
</dbReference>
<dbReference type="GO" id="GO:0047693">
    <property type="term" value="F:ATP diphosphatase activity"/>
    <property type="evidence" value="ECO:0007669"/>
    <property type="project" value="UniProtKB-EC"/>
</dbReference>
<dbReference type="GO" id="GO:0046872">
    <property type="term" value="F:metal ion binding"/>
    <property type="evidence" value="ECO:0007669"/>
    <property type="project" value="UniProtKB-KW"/>
</dbReference>
<dbReference type="GO" id="GO:0046061">
    <property type="term" value="P:dATP catabolic process"/>
    <property type="evidence" value="ECO:0007669"/>
    <property type="project" value="TreeGrafter"/>
</dbReference>
<dbReference type="GO" id="GO:0006203">
    <property type="term" value="P:dGTP catabolic process"/>
    <property type="evidence" value="ECO:0007669"/>
    <property type="project" value="TreeGrafter"/>
</dbReference>
<dbReference type="GO" id="GO:0046076">
    <property type="term" value="P:dTTP catabolic process"/>
    <property type="evidence" value="ECO:0007669"/>
    <property type="project" value="TreeGrafter"/>
</dbReference>
<dbReference type="GO" id="GO:0046081">
    <property type="term" value="P:dUTP catabolic process"/>
    <property type="evidence" value="ECO:0007669"/>
    <property type="project" value="TreeGrafter"/>
</dbReference>
<dbReference type="GO" id="GO:0046047">
    <property type="term" value="P:TTP catabolic process"/>
    <property type="evidence" value="ECO:0007669"/>
    <property type="project" value="TreeGrafter"/>
</dbReference>
<dbReference type="GO" id="GO:0046052">
    <property type="term" value="P:UTP catabolic process"/>
    <property type="evidence" value="ECO:0007669"/>
    <property type="project" value="TreeGrafter"/>
</dbReference>
<dbReference type="CDD" id="cd11529">
    <property type="entry name" value="NTP-PPase_MazG_Cterm"/>
    <property type="match status" value="1"/>
</dbReference>
<dbReference type="CDD" id="cd11528">
    <property type="entry name" value="NTP-PPase_MazG_Nterm"/>
    <property type="match status" value="1"/>
</dbReference>
<dbReference type="FunFam" id="1.10.287.1080:FF:000001">
    <property type="entry name" value="Nucleoside triphosphate pyrophosphohydrolase"/>
    <property type="match status" value="1"/>
</dbReference>
<dbReference type="FunFam" id="1.10.287.1080:FF:000003">
    <property type="entry name" value="Nucleoside triphosphate pyrophosphohydrolase"/>
    <property type="match status" value="1"/>
</dbReference>
<dbReference type="Gene3D" id="1.10.287.1080">
    <property type="entry name" value="MazG-like"/>
    <property type="match status" value="2"/>
</dbReference>
<dbReference type="InterPro" id="IPR004518">
    <property type="entry name" value="MazG-like_dom"/>
</dbReference>
<dbReference type="InterPro" id="IPR048011">
    <property type="entry name" value="NTP-PPase_MazG-like_C"/>
</dbReference>
<dbReference type="InterPro" id="IPR048015">
    <property type="entry name" value="NTP-PPase_MazG-like_N"/>
</dbReference>
<dbReference type="InterPro" id="IPR011551">
    <property type="entry name" value="NTP_PyrPHydrolase_MazG"/>
</dbReference>
<dbReference type="NCBIfam" id="TIGR00444">
    <property type="entry name" value="mazG"/>
    <property type="match status" value="1"/>
</dbReference>
<dbReference type="NCBIfam" id="NF007113">
    <property type="entry name" value="PRK09562.1"/>
    <property type="match status" value="1"/>
</dbReference>
<dbReference type="PANTHER" id="PTHR30522">
    <property type="entry name" value="NUCLEOSIDE TRIPHOSPHATE PYROPHOSPHOHYDROLASE"/>
    <property type="match status" value="1"/>
</dbReference>
<dbReference type="PANTHER" id="PTHR30522:SF0">
    <property type="entry name" value="NUCLEOSIDE TRIPHOSPHATE PYROPHOSPHOHYDROLASE"/>
    <property type="match status" value="1"/>
</dbReference>
<dbReference type="Pfam" id="PF03819">
    <property type="entry name" value="MazG"/>
    <property type="match status" value="2"/>
</dbReference>
<dbReference type="SUPFAM" id="SSF101386">
    <property type="entry name" value="all-alpha NTP pyrophosphatases"/>
    <property type="match status" value="2"/>
</dbReference>
<gene>
    <name type="primary">mazG</name>
    <name type="ordered locus">Z4096</name>
    <name type="ordered locus">ECs3641</name>
</gene>
<organism>
    <name type="scientific">Escherichia coli O157:H7</name>
    <dbReference type="NCBI Taxonomy" id="83334"/>
    <lineage>
        <taxon>Bacteria</taxon>
        <taxon>Pseudomonadati</taxon>
        <taxon>Pseudomonadota</taxon>
        <taxon>Gammaproteobacteria</taxon>
        <taxon>Enterobacterales</taxon>
        <taxon>Enterobacteriaceae</taxon>
        <taxon>Escherichia</taxon>
    </lineage>
</organism>
<comment type="function">
    <text evidence="1">Involved in the regulation of bacterial cell survival under conditions of nutritional stress. Regulates the MazE-MazF toxin-antitoxin (TA) system that mediates programmed cell death (PCD). This is achieved by lowering the cellular concentration of (p)ppGpp produced by RelA under amino acid starvation, thus protecting the cell from the toxicity of MazF. Reduction of (p)ppGpp can be achieved by direct degradation of (p)ppGpp or by degradation of NTPs, which are substrates for (p)ppGpp synthesis by RelA (By similarity).</text>
</comment>
<comment type="catalytic activity">
    <reaction>
        <text>ATP + H2O = AMP + diphosphate + H(+)</text>
        <dbReference type="Rhea" id="RHEA:14245"/>
        <dbReference type="ChEBI" id="CHEBI:15377"/>
        <dbReference type="ChEBI" id="CHEBI:15378"/>
        <dbReference type="ChEBI" id="CHEBI:30616"/>
        <dbReference type="ChEBI" id="CHEBI:33019"/>
        <dbReference type="ChEBI" id="CHEBI:456215"/>
        <dbReference type="EC" id="3.6.1.8"/>
    </reaction>
</comment>
<comment type="cofactor">
    <cofactor evidence="1">
        <name>Mg(2+)</name>
        <dbReference type="ChEBI" id="CHEBI:18420"/>
    </cofactor>
</comment>
<comment type="subunit">
    <text evidence="1">Homodimer.</text>
</comment>
<comment type="similarity">
    <text evidence="2">Belongs to the nucleoside triphosphate pyrophosphohydrolase family.</text>
</comment>
<accession>P0AEY4</accession>
<accession>P33646</accession>
<name>MAZG_ECO57</name>
<evidence type="ECO:0000250" key="1"/>
<evidence type="ECO:0000305" key="2"/>
<sequence>MNQIDRLLTIMQRLRDPENGCPWDKEQTFATIAPYTLEETYEVLDAIAREDFDDLRGELGDLLFQVVFYAQMAQEEGRFDFNDICAAISDKLERRHPHVFADSSAENSSEVLARWEQIKTEERAQKAQHSALDDIPRSLPALMRAQKIQKRCANVGFDWTTLGPVVDKVYEEIDEVMYEARQAVVDQAKLEEEMGDLLFATVNLARHLGTKAEIALQKANEKFERRFREVERIVAARGLEMTGVDLETMEEVWQQVKRQEIDL</sequence>
<feature type="chain" id="PRO_0000096249" description="Nucleoside triphosphate pyrophosphohydrolase">
    <location>
        <begin position="1"/>
        <end position="263"/>
    </location>
</feature>
<feature type="binding site" evidence="1">
    <location>
        <begin position="168"/>
        <end position="172"/>
    </location>
    <ligand>
        <name>ATP</name>
        <dbReference type="ChEBI" id="CHEBI:30616"/>
        <label>1</label>
    </ligand>
</feature>
<feature type="binding site" evidence="1">
    <location>
        <position position="172"/>
    </location>
    <ligand>
        <name>Mg(2+)</name>
        <dbReference type="ChEBI" id="CHEBI:18420"/>
    </ligand>
</feature>
<feature type="binding site" evidence="1">
    <location>
        <position position="175"/>
    </location>
    <ligand>
        <name>ATP</name>
        <dbReference type="ChEBI" id="CHEBI:30616"/>
        <label>1</label>
    </ligand>
</feature>
<feature type="binding site" evidence="1">
    <location>
        <position position="175"/>
    </location>
    <ligand>
        <name>Mg(2+)</name>
        <dbReference type="ChEBI" id="CHEBI:18420"/>
    </ligand>
</feature>
<feature type="binding site" evidence="1">
    <location>
        <begin position="189"/>
        <end position="192"/>
    </location>
    <ligand>
        <name>ATP</name>
        <dbReference type="ChEBI" id="CHEBI:30616"/>
        <label>1</label>
    </ligand>
</feature>
<feature type="binding site" evidence="1">
    <location>
        <position position="193"/>
    </location>
    <ligand>
        <name>Mg(2+)</name>
        <dbReference type="ChEBI" id="CHEBI:18420"/>
    </ligand>
</feature>
<feature type="binding site" evidence="1">
    <location>
        <position position="196"/>
    </location>
    <ligand>
        <name>ATP</name>
        <dbReference type="ChEBI" id="CHEBI:30616"/>
        <label>1</label>
    </ligand>
</feature>
<feature type="binding site" evidence="1">
    <location>
        <position position="196"/>
    </location>
    <ligand>
        <name>Mg(2+)</name>
        <dbReference type="ChEBI" id="CHEBI:18420"/>
    </ligand>
</feature>
<feature type="binding site" evidence="1">
    <location>
        <begin position="222"/>
        <end position="226"/>
    </location>
    <ligand>
        <name>ATP</name>
        <dbReference type="ChEBI" id="CHEBI:30616"/>
        <label>2</label>
    </ligand>
</feature>
<feature type="binding site" evidence="1">
    <location>
        <position position="253"/>
    </location>
    <ligand>
        <name>ATP</name>
        <dbReference type="ChEBI" id="CHEBI:30616"/>
        <label>2</label>
    </ligand>
</feature>
<keyword id="KW-0067">ATP-binding</keyword>
<keyword id="KW-0378">Hydrolase</keyword>
<keyword id="KW-0460">Magnesium</keyword>
<keyword id="KW-0479">Metal-binding</keyword>
<keyword id="KW-0547">Nucleotide-binding</keyword>
<keyword id="KW-1185">Reference proteome</keyword>